<dbReference type="EC" id="2.8.4.4" evidence="1"/>
<dbReference type="EMBL" id="CP001099">
    <property type="protein sequence ID" value="ACF11183.1"/>
    <property type="molecule type" value="Genomic_DNA"/>
</dbReference>
<dbReference type="RefSeq" id="WP_012502016.1">
    <property type="nucleotide sequence ID" value="NC_011027.1"/>
</dbReference>
<dbReference type="SMR" id="B3QMN0"/>
<dbReference type="STRING" id="517417.Cpar_0766"/>
<dbReference type="KEGG" id="cpc:Cpar_0766"/>
<dbReference type="eggNOG" id="COG0621">
    <property type="taxonomic scope" value="Bacteria"/>
</dbReference>
<dbReference type="HOGENOM" id="CLU_018697_0_1_10"/>
<dbReference type="OrthoDB" id="9805215at2"/>
<dbReference type="Proteomes" id="UP000008811">
    <property type="component" value="Chromosome"/>
</dbReference>
<dbReference type="GO" id="GO:0005829">
    <property type="term" value="C:cytosol"/>
    <property type="evidence" value="ECO:0007669"/>
    <property type="project" value="TreeGrafter"/>
</dbReference>
<dbReference type="GO" id="GO:0051539">
    <property type="term" value="F:4 iron, 4 sulfur cluster binding"/>
    <property type="evidence" value="ECO:0007669"/>
    <property type="project" value="UniProtKB-UniRule"/>
</dbReference>
<dbReference type="GO" id="GO:0035599">
    <property type="term" value="F:aspartic acid methylthiotransferase activity"/>
    <property type="evidence" value="ECO:0007669"/>
    <property type="project" value="TreeGrafter"/>
</dbReference>
<dbReference type="GO" id="GO:0046872">
    <property type="term" value="F:metal ion binding"/>
    <property type="evidence" value="ECO:0007669"/>
    <property type="project" value="UniProtKB-KW"/>
</dbReference>
<dbReference type="GO" id="GO:0103039">
    <property type="term" value="F:protein methylthiotransferase activity"/>
    <property type="evidence" value="ECO:0007669"/>
    <property type="project" value="UniProtKB-EC"/>
</dbReference>
<dbReference type="GO" id="GO:0006400">
    <property type="term" value="P:tRNA modification"/>
    <property type="evidence" value="ECO:0007669"/>
    <property type="project" value="InterPro"/>
</dbReference>
<dbReference type="CDD" id="cd01335">
    <property type="entry name" value="Radical_SAM"/>
    <property type="match status" value="1"/>
</dbReference>
<dbReference type="FunFam" id="3.80.30.20:FF:000001">
    <property type="entry name" value="tRNA-2-methylthio-N(6)-dimethylallyladenosine synthase 2"/>
    <property type="match status" value="1"/>
</dbReference>
<dbReference type="Gene3D" id="3.40.50.12160">
    <property type="entry name" value="Methylthiotransferase, N-terminal domain"/>
    <property type="match status" value="1"/>
</dbReference>
<dbReference type="Gene3D" id="2.40.50.140">
    <property type="entry name" value="Nucleic acid-binding proteins"/>
    <property type="match status" value="1"/>
</dbReference>
<dbReference type="Gene3D" id="3.80.30.20">
    <property type="entry name" value="tm_1862 like domain"/>
    <property type="match status" value="1"/>
</dbReference>
<dbReference type="HAMAP" id="MF_01865">
    <property type="entry name" value="MTTase_RimO"/>
    <property type="match status" value="1"/>
</dbReference>
<dbReference type="InterPro" id="IPR006638">
    <property type="entry name" value="Elp3/MiaA/NifB-like_rSAM"/>
</dbReference>
<dbReference type="InterPro" id="IPR005839">
    <property type="entry name" value="Methylthiotransferase"/>
</dbReference>
<dbReference type="InterPro" id="IPR020612">
    <property type="entry name" value="Methylthiotransferase_CS"/>
</dbReference>
<dbReference type="InterPro" id="IPR013848">
    <property type="entry name" value="Methylthiotransferase_N"/>
</dbReference>
<dbReference type="InterPro" id="IPR038135">
    <property type="entry name" value="Methylthiotransferase_N_sf"/>
</dbReference>
<dbReference type="InterPro" id="IPR012340">
    <property type="entry name" value="NA-bd_OB-fold"/>
</dbReference>
<dbReference type="InterPro" id="IPR005840">
    <property type="entry name" value="Ribosomal_uS12_MeSTrfase_RimO"/>
</dbReference>
<dbReference type="InterPro" id="IPR007197">
    <property type="entry name" value="rSAM"/>
</dbReference>
<dbReference type="InterPro" id="IPR023404">
    <property type="entry name" value="rSAM_horseshoe"/>
</dbReference>
<dbReference type="InterPro" id="IPR002792">
    <property type="entry name" value="TRAM_dom"/>
</dbReference>
<dbReference type="NCBIfam" id="TIGR01125">
    <property type="entry name" value="30S ribosomal protein S12 methylthiotransferase RimO"/>
    <property type="match status" value="1"/>
</dbReference>
<dbReference type="NCBIfam" id="TIGR00089">
    <property type="entry name" value="MiaB/RimO family radical SAM methylthiotransferase"/>
    <property type="match status" value="1"/>
</dbReference>
<dbReference type="PANTHER" id="PTHR43837">
    <property type="entry name" value="RIBOSOMAL PROTEIN S12 METHYLTHIOTRANSFERASE RIMO"/>
    <property type="match status" value="1"/>
</dbReference>
<dbReference type="PANTHER" id="PTHR43837:SF1">
    <property type="entry name" value="RIBOSOMAL PROTEIN US12 METHYLTHIOTRANSFERASE RIMO"/>
    <property type="match status" value="1"/>
</dbReference>
<dbReference type="Pfam" id="PF04055">
    <property type="entry name" value="Radical_SAM"/>
    <property type="match status" value="1"/>
</dbReference>
<dbReference type="Pfam" id="PF18693">
    <property type="entry name" value="TRAM_2"/>
    <property type="match status" value="1"/>
</dbReference>
<dbReference type="Pfam" id="PF00919">
    <property type="entry name" value="UPF0004"/>
    <property type="match status" value="1"/>
</dbReference>
<dbReference type="SFLD" id="SFLDG01082">
    <property type="entry name" value="B12-binding_domain_containing"/>
    <property type="match status" value="1"/>
</dbReference>
<dbReference type="SFLD" id="SFLDG01061">
    <property type="entry name" value="methylthiotransferase"/>
    <property type="match status" value="1"/>
</dbReference>
<dbReference type="SFLD" id="SFLDF00274">
    <property type="entry name" value="ribosomal_protein_S12_methylth"/>
    <property type="match status" value="1"/>
</dbReference>
<dbReference type="SMART" id="SM00729">
    <property type="entry name" value="Elp3"/>
    <property type="match status" value="1"/>
</dbReference>
<dbReference type="SUPFAM" id="SSF102114">
    <property type="entry name" value="Radical SAM enzymes"/>
    <property type="match status" value="1"/>
</dbReference>
<dbReference type="PROSITE" id="PS51449">
    <property type="entry name" value="MTTASE_N"/>
    <property type="match status" value="1"/>
</dbReference>
<dbReference type="PROSITE" id="PS01278">
    <property type="entry name" value="MTTASE_RADICAL"/>
    <property type="match status" value="1"/>
</dbReference>
<dbReference type="PROSITE" id="PS51918">
    <property type="entry name" value="RADICAL_SAM"/>
    <property type="match status" value="1"/>
</dbReference>
<dbReference type="PROSITE" id="PS50926">
    <property type="entry name" value="TRAM"/>
    <property type="match status" value="1"/>
</dbReference>
<evidence type="ECO:0000255" key="1">
    <source>
        <dbReference type="HAMAP-Rule" id="MF_01865"/>
    </source>
</evidence>
<evidence type="ECO:0000255" key="2">
    <source>
        <dbReference type="PROSITE-ProRule" id="PRU01266"/>
    </source>
</evidence>
<feature type="chain" id="PRO_0000374764" description="Ribosomal protein uS12 methylthiotransferase RimO">
    <location>
        <begin position="1"/>
        <end position="437"/>
    </location>
</feature>
<feature type="domain" description="MTTase N-terminal" evidence="1">
    <location>
        <begin position="9"/>
        <end position="125"/>
    </location>
</feature>
<feature type="domain" description="Radical SAM core" evidence="2">
    <location>
        <begin position="135"/>
        <end position="364"/>
    </location>
</feature>
<feature type="domain" description="TRAM" evidence="1">
    <location>
        <begin position="367"/>
        <end position="434"/>
    </location>
</feature>
<feature type="binding site" evidence="1">
    <location>
        <position position="18"/>
    </location>
    <ligand>
        <name>[4Fe-4S] cluster</name>
        <dbReference type="ChEBI" id="CHEBI:49883"/>
        <label>1</label>
    </ligand>
</feature>
<feature type="binding site" evidence="1">
    <location>
        <position position="54"/>
    </location>
    <ligand>
        <name>[4Fe-4S] cluster</name>
        <dbReference type="ChEBI" id="CHEBI:49883"/>
        <label>1</label>
    </ligand>
</feature>
<feature type="binding site" evidence="1">
    <location>
        <position position="88"/>
    </location>
    <ligand>
        <name>[4Fe-4S] cluster</name>
        <dbReference type="ChEBI" id="CHEBI:49883"/>
        <label>1</label>
    </ligand>
</feature>
<feature type="binding site" evidence="1">
    <location>
        <position position="149"/>
    </location>
    <ligand>
        <name>[4Fe-4S] cluster</name>
        <dbReference type="ChEBI" id="CHEBI:49883"/>
        <label>2</label>
        <note>4Fe-4S-S-AdoMet</note>
    </ligand>
</feature>
<feature type="binding site" evidence="1">
    <location>
        <position position="153"/>
    </location>
    <ligand>
        <name>[4Fe-4S] cluster</name>
        <dbReference type="ChEBI" id="CHEBI:49883"/>
        <label>2</label>
        <note>4Fe-4S-S-AdoMet</note>
    </ligand>
</feature>
<feature type="binding site" evidence="1">
    <location>
        <position position="156"/>
    </location>
    <ligand>
        <name>[4Fe-4S] cluster</name>
        <dbReference type="ChEBI" id="CHEBI:49883"/>
        <label>2</label>
        <note>4Fe-4S-S-AdoMet</note>
    </ligand>
</feature>
<organism>
    <name type="scientific">Chlorobaculum parvum (strain DSM 263 / NCIMB 8327)</name>
    <name type="common">Chlorobium vibrioforme subsp. thiosulfatophilum</name>
    <dbReference type="NCBI Taxonomy" id="517417"/>
    <lineage>
        <taxon>Bacteria</taxon>
        <taxon>Pseudomonadati</taxon>
        <taxon>Chlorobiota</taxon>
        <taxon>Chlorobiia</taxon>
        <taxon>Chlorobiales</taxon>
        <taxon>Chlorobiaceae</taxon>
        <taxon>Chlorobaculum</taxon>
    </lineage>
</organism>
<protein>
    <recommendedName>
        <fullName evidence="1">Ribosomal protein uS12 methylthiotransferase RimO</fullName>
        <shortName evidence="1">uS12 MTTase</shortName>
        <shortName evidence="1">uS12 methylthiotransferase</shortName>
        <ecNumber evidence="1">2.8.4.4</ecNumber>
    </recommendedName>
    <alternativeName>
        <fullName evidence="1">Ribosomal protein uS12 (aspartate-C(3))-methylthiotransferase</fullName>
    </alternativeName>
    <alternativeName>
        <fullName evidence="1">Ribosome maturation factor RimO</fullName>
    </alternativeName>
</protein>
<comment type="function">
    <text evidence="1">Catalyzes the methylthiolation of an aspartic acid residue of ribosomal protein uS12.</text>
</comment>
<comment type="catalytic activity">
    <reaction evidence="1">
        <text>L-aspartate(89)-[ribosomal protein uS12]-hydrogen + (sulfur carrier)-SH + AH2 + 2 S-adenosyl-L-methionine = 3-methylsulfanyl-L-aspartate(89)-[ribosomal protein uS12]-hydrogen + (sulfur carrier)-H + 5'-deoxyadenosine + L-methionine + A + S-adenosyl-L-homocysteine + 2 H(+)</text>
        <dbReference type="Rhea" id="RHEA:37087"/>
        <dbReference type="Rhea" id="RHEA-COMP:10460"/>
        <dbReference type="Rhea" id="RHEA-COMP:10461"/>
        <dbReference type="Rhea" id="RHEA-COMP:14737"/>
        <dbReference type="Rhea" id="RHEA-COMP:14739"/>
        <dbReference type="ChEBI" id="CHEBI:13193"/>
        <dbReference type="ChEBI" id="CHEBI:15378"/>
        <dbReference type="ChEBI" id="CHEBI:17319"/>
        <dbReference type="ChEBI" id="CHEBI:17499"/>
        <dbReference type="ChEBI" id="CHEBI:29917"/>
        <dbReference type="ChEBI" id="CHEBI:29961"/>
        <dbReference type="ChEBI" id="CHEBI:57844"/>
        <dbReference type="ChEBI" id="CHEBI:57856"/>
        <dbReference type="ChEBI" id="CHEBI:59789"/>
        <dbReference type="ChEBI" id="CHEBI:64428"/>
        <dbReference type="ChEBI" id="CHEBI:73599"/>
        <dbReference type="EC" id="2.8.4.4"/>
    </reaction>
</comment>
<comment type="cofactor">
    <cofactor evidence="1">
        <name>[4Fe-4S] cluster</name>
        <dbReference type="ChEBI" id="CHEBI:49883"/>
    </cofactor>
    <text evidence="1">Binds 2 [4Fe-4S] clusters. One cluster is coordinated with 3 cysteines and an exchangeable S-adenosyl-L-methionine.</text>
</comment>
<comment type="subcellular location">
    <subcellularLocation>
        <location evidence="1">Cytoplasm</location>
    </subcellularLocation>
</comment>
<comment type="similarity">
    <text evidence="1">Belongs to the methylthiotransferase family. RimO subfamily.</text>
</comment>
<accession>B3QMN0</accession>
<keyword id="KW-0004">4Fe-4S</keyword>
<keyword id="KW-0963">Cytoplasm</keyword>
<keyword id="KW-0408">Iron</keyword>
<keyword id="KW-0411">Iron-sulfur</keyword>
<keyword id="KW-0479">Metal-binding</keyword>
<keyword id="KW-0949">S-adenosyl-L-methionine</keyword>
<keyword id="KW-0808">Transferase</keyword>
<reference key="1">
    <citation type="submission" date="2008-06" db="EMBL/GenBank/DDBJ databases">
        <title>Complete sequence of Chlorobaculum parvum NCIB 8327.</title>
        <authorList>
            <consortium name="US DOE Joint Genome Institute"/>
            <person name="Lucas S."/>
            <person name="Copeland A."/>
            <person name="Lapidus A."/>
            <person name="Glavina del Rio T."/>
            <person name="Dalin E."/>
            <person name="Tice H."/>
            <person name="Bruce D."/>
            <person name="Goodwin L."/>
            <person name="Pitluck S."/>
            <person name="Schmutz J."/>
            <person name="Larimer F."/>
            <person name="Land M."/>
            <person name="Hauser L."/>
            <person name="Kyrpides N."/>
            <person name="Mikhailova N."/>
            <person name="Zhao F."/>
            <person name="Li T."/>
            <person name="Liu Z."/>
            <person name="Overmann J."/>
            <person name="Bryant D.A."/>
            <person name="Richardson P."/>
        </authorList>
    </citation>
    <scope>NUCLEOTIDE SEQUENCE [LARGE SCALE GENOMIC DNA]</scope>
    <source>
        <strain>DSM 263 / NCIMB 8327</strain>
    </source>
</reference>
<proteinExistence type="inferred from homology"/>
<sequence>MATSNERKPAIFLLSLGCSKNTVDSERLTAQAVASGLTFTDDVDEASIILINTCGFIEDAKKESIDEMLAAIGKKEEGIVREVYVMGCLVELYRKELSEEMPEVDGWFGTRQLPDVLAAIGAHYCEELYDRRELLTPPHYAFLKISEGCNRRCSFCSIPKIRGPYVSQPIEQLLREAALLQEQGVRELNLIAQDISVYGYDLYGKPALNDLTLRLSDMGFDWIRLLYAYPLNFPLEVIDTMRQRRNVCNYLDMPLQHINDRILKSMQRGIGRKGTEELIDAIRQKNPDIRLRTTMIAGYPSETREEFDELLDFVRQARFDRLGCFPYRHEEHAPAYALEDTISDKEKEERVGELMELQESIAASLNRKLEGQTLTVLIDRIEDNVAYGRTEYDAPEVDNDVIIEIGDEAVEEGEFRQVTVEDSTAYELFGRVGSECS</sequence>
<name>RIMO_CHLP8</name>
<gene>
    <name evidence="1" type="primary">rimO</name>
    <name type="ordered locus">Cpar_0766</name>
</gene>